<dbReference type="EC" id="3.4.23.36" evidence="1"/>
<dbReference type="EMBL" id="CP000786">
    <property type="protein sequence ID" value="ABZ97856.1"/>
    <property type="molecule type" value="Genomic_DNA"/>
</dbReference>
<dbReference type="RefSeq" id="WP_012388734.1">
    <property type="nucleotide sequence ID" value="NC_010602.1"/>
</dbReference>
<dbReference type="SMR" id="B0SRR1"/>
<dbReference type="STRING" id="456481.LEPBI_I1750"/>
<dbReference type="KEGG" id="lbi:LEPBI_I1750"/>
<dbReference type="HOGENOM" id="CLU_083252_3_1_12"/>
<dbReference type="OrthoDB" id="9810259at2"/>
<dbReference type="BioCyc" id="LBIF456481:LEPBI_RS08645-MONOMER"/>
<dbReference type="UniPathway" id="UPA00665"/>
<dbReference type="Proteomes" id="UP000001847">
    <property type="component" value="Chromosome I"/>
</dbReference>
<dbReference type="GO" id="GO:0005886">
    <property type="term" value="C:plasma membrane"/>
    <property type="evidence" value="ECO:0007669"/>
    <property type="project" value="UniProtKB-SubCell"/>
</dbReference>
<dbReference type="GO" id="GO:0004190">
    <property type="term" value="F:aspartic-type endopeptidase activity"/>
    <property type="evidence" value="ECO:0007669"/>
    <property type="project" value="UniProtKB-UniRule"/>
</dbReference>
<dbReference type="GO" id="GO:0006508">
    <property type="term" value="P:proteolysis"/>
    <property type="evidence" value="ECO:0007669"/>
    <property type="project" value="UniProtKB-KW"/>
</dbReference>
<dbReference type="HAMAP" id="MF_00161">
    <property type="entry name" value="LspA"/>
    <property type="match status" value="1"/>
</dbReference>
<dbReference type="InterPro" id="IPR001872">
    <property type="entry name" value="Peptidase_A8"/>
</dbReference>
<dbReference type="NCBIfam" id="NF011364">
    <property type="entry name" value="PRK14783.1"/>
    <property type="match status" value="1"/>
</dbReference>
<dbReference type="PANTHER" id="PTHR33695">
    <property type="entry name" value="LIPOPROTEIN SIGNAL PEPTIDASE"/>
    <property type="match status" value="1"/>
</dbReference>
<dbReference type="PANTHER" id="PTHR33695:SF1">
    <property type="entry name" value="LIPOPROTEIN SIGNAL PEPTIDASE"/>
    <property type="match status" value="1"/>
</dbReference>
<dbReference type="Pfam" id="PF01252">
    <property type="entry name" value="Peptidase_A8"/>
    <property type="match status" value="1"/>
</dbReference>
<dbReference type="PRINTS" id="PR00781">
    <property type="entry name" value="LIPOSIGPTASE"/>
</dbReference>
<dbReference type="PROSITE" id="PS00855">
    <property type="entry name" value="SPASE_II"/>
    <property type="match status" value="1"/>
</dbReference>
<name>LSPA_LEPBP</name>
<gene>
    <name evidence="1" type="primary">lspA</name>
    <name type="ordered locus">LEPBI_I1750</name>
</gene>
<protein>
    <recommendedName>
        <fullName evidence="1">Lipoprotein signal peptidase</fullName>
        <ecNumber evidence="1">3.4.23.36</ecNumber>
    </recommendedName>
    <alternativeName>
        <fullName evidence="1">Prolipoprotein signal peptidase</fullName>
    </alternativeName>
    <alternativeName>
        <fullName evidence="1">Signal peptidase II</fullName>
        <shortName evidence="1">SPase II</shortName>
    </alternativeName>
</protein>
<proteinExistence type="inferred from homology"/>
<comment type="function">
    <text evidence="1">This protein specifically catalyzes the removal of signal peptides from prolipoproteins.</text>
</comment>
<comment type="catalytic activity">
    <reaction evidence="1">
        <text>Release of signal peptides from bacterial membrane prolipoproteins. Hydrolyzes -Xaa-Yaa-Zaa-|-(S,diacylglyceryl)Cys-, in which Xaa is hydrophobic (preferably Leu), and Yaa (Ala or Ser) and Zaa (Gly or Ala) have small, neutral side chains.</text>
        <dbReference type="EC" id="3.4.23.36"/>
    </reaction>
</comment>
<comment type="pathway">
    <text evidence="1">Protein modification; lipoprotein biosynthesis (signal peptide cleavage).</text>
</comment>
<comment type="subcellular location">
    <subcellularLocation>
        <location evidence="1">Cell inner membrane</location>
        <topology evidence="1">Multi-pass membrane protein</topology>
    </subcellularLocation>
</comment>
<comment type="similarity">
    <text evidence="1">Belongs to the peptidase A8 family.</text>
</comment>
<evidence type="ECO:0000255" key="1">
    <source>
        <dbReference type="HAMAP-Rule" id="MF_00161"/>
    </source>
</evidence>
<feature type="chain" id="PRO_1000097262" description="Lipoprotein signal peptidase">
    <location>
        <begin position="1"/>
        <end position="186"/>
    </location>
</feature>
<feature type="transmembrane region" description="Helical" evidence="1">
    <location>
        <begin position="8"/>
        <end position="28"/>
    </location>
</feature>
<feature type="transmembrane region" description="Helical" evidence="1">
    <location>
        <begin position="44"/>
        <end position="64"/>
    </location>
</feature>
<feature type="transmembrane region" description="Helical" evidence="1">
    <location>
        <begin position="66"/>
        <end position="86"/>
    </location>
</feature>
<feature type="transmembrane region" description="Helical" evidence="1">
    <location>
        <begin position="97"/>
        <end position="117"/>
    </location>
</feature>
<feature type="transmembrane region" description="Helical" evidence="1">
    <location>
        <begin position="157"/>
        <end position="177"/>
    </location>
</feature>
<feature type="active site" evidence="1">
    <location>
        <position position="142"/>
    </location>
</feature>
<feature type="active site" evidence="1">
    <location>
        <position position="164"/>
    </location>
</feature>
<organism>
    <name type="scientific">Leptospira biflexa serovar Patoc (strain Patoc 1 / ATCC 23582 / Paris)</name>
    <dbReference type="NCBI Taxonomy" id="456481"/>
    <lineage>
        <taxon>Bacteria</taxon>
        <taxon>Pseudomonadati</taxon>
        <taxon>Spirochaetota</taxon>
        <taxon>Spirochaetia</taxon>
        <taxon>Leptospirales</taxon>
        <taxon>Leptospiraceae</taxon>
        <taxon>Leptospira</taxon>
    </lineage>
</organism>
<sequence>MKLPKTPFFSVFKPGYLAFVAFGLFLDLSSKYVIITKMYAHESIPVLGDFFRLSLTFNTGFVFGLFQDNALPSLFATGFAIVFLIFYRWENSDLGNAWGWNFVMAGAFGNFLDKFFVKIPGSGFRFGFTPEKPGIEFIGVVDFLDFEWPDFLLFDRWPAFNVADSCVSIGIVILLFTMDWKEMDKK</sequence>
<keyword id="KW-0064">Aspartyl protease</keyword>
<keyword id="KW-0997">Cell inner membrane</keyword>
<keyword id="KW-1003">Cell membrane</keyword>
<keyword id="KW-0378">Hydrolase</keyword>
<keyword id="KW-0472">Membrane</keyword>
<keyword id="KW-0645">Protease</keyword>
<keyword id="KW-1185">Reference proteome</keyword>
<keyword id="KW-0812">Transmembrane</keyword>
<keyword id="KW-1133">Transmembrane helix</keyword>
<accession>B0SRR1</accession>
<reference key="1">
    <citation type="journal article" date="2008" name="PLoS ONE">
        <title>Genome sequence of the saprophyte Leptospira biflexa provides insights into the evolution of Leptospira and the pathogenesis of leptospirosis.</title>
        <authorList>
            <person name="Picardeau M."/>
            <person name="Bulach D.M."/>
            <person name="Bouchier C."/>
            <person name="Zuerner R.L."/>
            <person name="Zidane N."/>
            <person name="Wilson P.J."/>
            <person name="Creno S."/>
            <person name="Kuczek E.S."/>
            <person name="Bommezzadri S."/>
            <person name="Davis J.C."/>
            <person name="McGrath A."/>
            <person name="Johnson M.J."/>
            <person name="Boursaux-Eude C."/>
            <person name="Seemann T."/>
            <person name="Rouy Z."/>
            <person name="Coppel R.L."/>
            <person name="Rood J.I."/>
            <person name="Lajus A."/>
            <person name="Davies J.K."/>
            <person name="Medigue C."/>
            <person name="Adler B."/>
        </authorList>
    </citation>
    <scope>NUCLEOTIDE SEQUENCE [LARGE SCALE GENOMIC DNA]</scope>
    <source>
        <strain>Patoc 1 / ATCC 23582 / Paris</strain>
    </source>
</reference>